<accession>C1L2G8</accession>
<proteinExistence type="inferred from homology"/>
<organism>
    <name type="scientific">Listeria monocytogenes serotype 4b (strain CLIP80459)</name>
    <dbReference type="NCBI Taxonomy" id="568819"/>
    <lineage>
        <taxon>Bacteria</taxon>
        <taxon>Bacillati</taxon>
        <taxon>Bacillota</taxon>
        <taxon>Bacilli</taxon>
        <taxon>Bacillales</taxon>
        <taxon>Listeriaceae</taxon>
        <taxon>Listeria</taxon>
    </lineage>
</organism>
<evidence type="ECO:0000255" key="1">
    <source>
        <dbReference type="HAMAP-Rule" id="MF_00456"/>
    </source>
</evidence>
<gene>
    <name evidence="1" type="primary">proB</name>
    <name type="ordered locus">Lm4b_01270</name>
</gene>
<reference key="1">
    <citation type="journal article" date="2012" name="BMC Genomics">
        <title>Comparative genomics and transcriptomics of lineages I, II, and III strains of Listeria monocytogenes.</title>
        <authorList>
            <person name="Hain T."/>
            <person name="Ghai R."/>
            <person name="Billion A."/>
            <person name="Kuenne C.T."/>
            <person name="Steinweg C."/>
            <person name="Izar B."/>
            <person name="Mohamed W."/>
            <person name="Mraheil M."/>
            <person name="Domann E."/>
            <person name="Schaffrath S."/>
            <person name="Karst U."/>
            <person name="Goesmann A."/>
            <person name="Oehm S."/>
            <person name="Puhler A."/>
            <person name="Merkl R."/>
            <person name="Vorwerk S."/>
            <person name="Glaser P."/>
            <person name="Garrido P."/>
            <person name="Rusniok C."/>
            <person name="Buchrieser C."/>
            <person name="Goebel W."/>
            <person name="Chakraborty T."/>
        </authorList>
    </citation>
    <scope>NUCLEOTIDE SEQUENCE [LARGE SCALE GENOMIC DNA]</scope>
    <source>
        <strain>CLIP80459</strain>
    </source>
</reference>
<protein>
    <recommendedName>
        <fullName evidence="1">Glutamate 5-kinase</fullName>
        <ecNumber evidence="1">2.7.2.11</ecNumber>
    </recommendedName>
    <alternativeName>
        <fullName evidence="1">Gamma-glutamyl kinase</fullName>
        <shortName evidence="1">GK</shortName>
    </alternativeName>
</protein>
<feature type="chain" id="PRO_1000206273" description="Glutamate 5-kinase">
    <location>
        <begin position="1"/>
        <end position="276"/>
    </location>
</feature>
<feature type="binding site" evidence="1">
    <location>
        <position position="14"/>
    </location>
    <ligand>
        <name>ATP</name>
        <dbReference type="ChEBI" id="CHEBI:30616"/>
    </ligand>
</feature>
<feature type="binding site" evidence="1">
    <location>
        <position position="54"/>
    </location>
    <ligand>
        <name>substrate</name>
    </ligand>
</feature>
<feature type="binding site" evidence="1">
    <location>
        <position position="141"/>
    </location>
    <ligand>
        <name>substrate</name>
    </ligand>
</feature>
<feature type="binding site" evidence="1">
    <location>
        <position position="157"/>
    </location>
    <ligand>
        <name>substrate</name>
    </ligand>
</feature>
<feature type="binding site" evidence="1">
    <location>
        <begin position="177"/>
        <end position="178"/>
    </location>
    <ligand>
        <name>ATP</name>
        <dbReference type="ChEBI" id="CHEBI:30616"/>
    </ligand>
</feature>
<feature type="binding site" evidence="1">
    <location>
        <begin position="219"/>
        <end position="225"/>
    </location>
    <ligand>
        <name>ATP</name>
        <dbReference type="ChEBI" id="CHEBI:30616"/>
    </ligand>
</feature>
<sequence>MRESLKNSKRLVIKVGTSTLMYGNGHINLRTIEKLAMVLSDLRNEGKEVILVSSGAIGVGCHKLQLSVRPTSIPDLQAVASVGQSELMHIYSKFFGEYGQVVGQVLLTRDVTDFPISRENVMNTLDSLLSRGIIPIVNENDTVAVEELEHVTKYGDNDLLSAIVAKLVQADLLIMLSDIDGFYGSNPATDPEAVMFSEINQITPEIEALAGGRGSKFGTGGMLTKLSAASYCMDSNQKMILTNGKNPTVIFNIMQGEQIGTLFASKKEELSHDRTH</sequence>
<keyword id="KW-0028">Amino-acid biosynthesis</keyword>
<keyword id="KW-0067">ATP-binding</keyword>
<keyword id="KW-0963">Cytoplasm</keyword>
<keyword id="KW-0418">Kinase</keyword>
<keyword id="KW-0547">Nucleotide-binding</keyword>
<keyword id="KW-0641">Proline biosynthesis</keyword>
<keyword id="KW-0808">Transferase</keyword>
<dbReference type="EC" id="2.7.2.11" evidence="1"/>
<dbReference type="EMBL" id="FM242711">
    <property type="protein sequence ID" value="CAS05034.1"/>
    <property type="molecule type" value="Genomic_DNA"/>
</dbReference>
<dbReference type="RefSeq" id="WP_003726720.1">
    <property type="nucleotide sequence ID" value="NC_012488.1"/>
</dbReference>
<dbReference type="SMR" id="C1L2G8"/>
<dbReference type="KEGG" id="lmc:Lm4b_01270"/>
<dbReference type="HOGENOM" id="CLU_025400_0_2_9"/>
<dbReference type="UniPathway" id="UPA00098">
    <property type="reaction ID" value="UER00359"/>
</dbReference>
<dbReference type="GO" id="GO:0005829">
    <property type="term" value="C:cytosol"/>
    <property type="evidence" value="ECO:0007669"/>
    <property type="project" value="TreeGrafter"/>
</dbReference>
<dbReference type="GO" id="GO:0005524">
    <property type="term" value="F:ATP binding"/>
    <property type="evidence" value="ECO:0007669"/>
    <property type="project" value="UniProtKB-KW"/>
</dbReference>
<dbReference type="GO" id="GO:0004349">
    <property type="term" value="F:glutamate 5-kinase activity"/>
    <property type="evidence" value="ECO:0007669"/>
    <property type="project" value="UniProtKB-UniRule"/>
</dbReference>
<dbReference type="GO" id="GO:0055129">
    <property type="term" value="P:L-proline biosynthetic process"/>
    <property type="evidence" value="ECO:0007669"/>
    <property type="project" value="UniProtKB-UniRule"/>
</dbReference>
<dbReference type="CDD" id="cd04242">
    <property type="entry name" value="AAK_G5K_ProB"/>
    <property type="match status" value="1"/>
</dbReference>
<dbReference type="FunFam" id="3.40.1160.10:FF:000036">
    <property type="entry name" value="Glutamate 5-kinase"/>
    <property type="match status" value="1"/>
</dbReference>
<dbReference type="Gene3D" id="3.40.1160.10">
    <property type="entry name" value="Acetylglutamate kinase-like"/>
    <property type="match status" value="1"/>
</dbReference>
<dbReference type="HAMAP" id="MF_00456">
    <property type="entry name" value="ProB"/>
    <property type="match status" value="1"/>
</dbReference>
<dbReference type="InterPro" id="IPR036393">
    <property type="entry name" value="AceGlu_kinase-like_sf"/>
</dbReference>
<dbReference type="InterPro" id="IPR001048">
    <property type="entry name" value="Asp/Glu/Uridylate_kinase"/>
</dbReference>
<dbReference type="InterPro" id="IPR041739">
    <property type="entry name" value="G5K_ProB"/>
</dbReference>
<dbReference type="InterPro" id="IPR001057">
    <property type="entry name" value="Glu/AcGlu_kinase"/>
</dbReference>
<dbReference type="InterPro" id="IPR011529">
    <property type="entry name" value="Glu_5kinase"/>
</dbReference>
<dbReference type="InterPro" id="IPR005715">
    <property type="entry name" value="Glu_5kinase/COase_Synthase"/>
</dbReference>
<dbReference type="InterPro" id="IPR019797">
    <property type="entry name" value="Glutamate_5-kinase_CS"/>
</dbReference>
<dbReference type="NCBIfam" id="TIGR01027">
    <property type="entry name" value="proB"/>
    <property type="match status" value="1"/>
</dbReference>
<dbReference type="PANTHER" id="PTHR43654">
    <property type="entry name" value="GLUTAMATE 5-KINASE"/>
    <property type="match status" value="1"/>
</dbReference>
<dbReference type="PANTHER" id="PTHR43654:SF1">
    <property type="entry name" value="ISOPENTENYL PHOSPHATE KINASE"/>
    <property type="match status" value="1"/>
</dbReference>
<dbReference type="Pfam" id="PF00696">
    <property type="entry name" value="AA_kinase"/>
    <property type="match status" value="1"/>
</dbReference>
<dbReference type="PIRSF" id="PIRSF000729">
    <property type="entry name" value="GK"/>
    <property type="match status" value="1"/>
</dbReference>
<dbReference type="PRINTS" id="PR00474">
    <property type="entry name" value="GLU5KINASE"/>
</dbReference>
<dbReference type="SUPFAM" id="SSF53633">
    <property type="entry name" value="Carbamate kinase-like"/>
    <property type="match status" value="1"/>
</dbReference>
<dbReference type="PROSITE" id="PS00902">
    <property type="entry name" value="GLUTAMATE_5_KINASE"/>
    <property type="match status" value="1"/>
</dbReference>
<comment type="function">
    <text evidence="1">Catalyzes the transfer of a phosphate group to glutamate to form L-glutamate 5-phosphate.</text>
</comment>
<comment type="catalytic activity">
    <reaction evidence="1">
        <text>L-glutamate + ATP = L-glutamyl 5-phosphate + ADP</text>
        <dbReference type="Rhea" id="RHEA:14877"/>
        <dbReference type="ChEBI" id="CHEBI:29985"/>
        <dbReference type="ChEBI" id="CHEBI:30616"/>
        <dbReference type="ChEBI" id="CHEBI:58274"/>
        <dbReference type="ChEBI" id="CHEBI:456216"/>
        <dbReference type="EC" id="2.7.2.11"/>
    </reaction>
</comment>
<comment type="pathway">
    <text evidence="1">Amino-acid biosynthesis; L-proline biosynthesis; L-glutamate 5-semialdehyde from L-glutamate: step 1/2.</text>
</comment>
<comment type="subcellular location">
    <subcellularLocation>
        <location evidence="1">Cytoplasm</location>
    </subcellularLocation>
</comment>
<comment type="similarity">
    <text evidence="1">Belongs to the glutamate 5-kinase family.</text>
</comment>
<name>PROB_LISMC</name>